<sequence length="486" mass="51259">MAKITQTMISQLLAAVGGSSNVSKCGNCMTRLRLTLANNGVADQAVIKQIPGVMGVVESDEQFQIILGPGKAQQAAELMNKLIESVINGDVQEQAMASDTNDLSSVAAEQKKQMKSKQTSAVQRFLSKFATIFTPLIPGFIAAGLLLGFATLLEQMFVLEQTPSQFILDLIAYMKVFGKGLFAFLSILIGYNAQQAFGGSGVNGAILASLFVLGYNPDATSGIYSGMSEFFGYTIDPRGNIIGVLLAAIIGAQVERKVREYMPDDLDMILTSVVTLLIMGVVTFVVIMPIGGELFKGMSWLFLNLNDNPLGAAILAGLFLISVVFGIHQGFVPVYFALMEAQGFNSLFPILAMAGGGQVGASLALYFKAKKDAVLRTQVKGAIIPGILGIGEPLIYGVTLPRVKPFVTACIGGAAGGFFIGLVSYLGLPVGLNTVFGPSGIVAIPLMTSHSGIFAGMAVFVVGLLISYVVGFLATYFFGSKDVDLS</sequence>
<feature type="chain" id="PRO_0000248964" description="PTS system N-acetylmuramic acid-specific EIIBC component">
    <location>
        <begin position="1"/>
        <end position="486"/>
    </location>
</feature>
<feature type="transmembrane region" description="Helical" evidence="3">
    <location>
        <begin position="129"/>
        <end position="149"/>
    </location>
</feature>
<feature type="transmembrane region" description="Helical" evidence="3">
    <location>
        <begin position="170"/>
        <end position="190"/>
    </location>
</feature>
<feature type="transmembrane region" description="Helical" evidence="3">
    <location>
        <begin position="196"/>
        <end position="216"/>
    </location>
</feature>
<feature type="transmembrane region" description="Helical" evidence="3">
    <location>
        <begin position="230"/>
        <end position="250"/>
    </location>
</feature>
<feature type="transmembrane region" description="Helical" evidence="3">
    <location>
        <begin position="268"/>
        <end position="288"/>
    </location>
</feature>
<feature type="transmembrane region" description="Helical" evidence="3">
    <location>
        <begin position="312"/>
        <end position="332"/>
    </location>
</feature>
<feature type="transmembrane region" description="Helical" evidence="3">
    <location>
        <begin position="347"/>
        <end position="367"/>
    </location>
</feature>
<feature type="transmembrane region" description="Helical" evidence="3">
    <location>
        <begin position="381"/>
        <end position="401"/>
    </location>
</feature>
<feature type="transmembrane region" description="Helical" evidence="3">
    <location>
        <begin position="411"/>
        <end position="431"/>
    </location>
</feature>
<feature type="transmembrane region" description="Helical" evidence="3">
    <location>
        <begin position="453"/>
        <end position="473"/>
    </location>
</feature>
<feature type="domain" description="PTS EIIB type-1" evidence="2">
    <location>
        <begin position="1"/>
        <end position="89"/>
    </location>
</feature>
<feature type="domain" description="PTS EIIC type-1" evidence="3">
    <location>
        <begin position="127"/>
        <end position="486"/>
    </location>
</feature>
<feature type="active site" description="Phosphocysteine intermediate; for EIIB activity" evidence="2">
    <location>
        <position position="28"/>
    </location>
</feature>
<evidence type="ECO:0000250" key="1">
    <source>
        <dbReference type="UniProtKB" id="P77272"/>
    </source>
</evidence>
<evidence type="ECO:0000255" key="2">
    <source>
        <dbReference type="PROSITE-ProRule" id="PRU00421"/>
    </source>
</evidence>
<evidence type="ECO:0000255" key="3">
    <source>
        <dbReference type="PROSITE-ProRule" id="PRU00426"/>
    </source>
</evidence>
<accession>Q7MBS2</accession>
<comment type="function">
    <text evidence="1">The phosphoenolpyruvate-dependent sugar phosphotransferase system (sugar PTS), a major carbohydrate active transport system, catalyzes the phosphorylation of incoming sugar substrates concomitantly with their translocation across the cell membrane. This system is involved in N-acetylmuramic acid (MurNAc) transport, yielding cytoplasmic MurNAc-6-P. Is also able to take up anhydro-N-acetylmuramic acid (anhMurNAc), but cannot phosphorylate the carbon 6, probably because of the 1,6-anhydro ring.</text>
</comment>
<comment type="catalytic activity">
    <reaction evidence="1">
        <text>N-acetyl-beta-D-muramate(out) + N(pros)-phospho-L-histidyl-[protein] = N-acetyl-beta-D-muramate 6-phosphate(in) + L-histidyl-[protein]</text>
        <dbReference type="Rhea" id="RHEA:33399"/>
        <dbReference type="Rhea" id="RHEA-COMP:9745"/>
        <dbReference type="Rhea" id="RHEA-COMP:9746"/>
        <dbReference type="ChEBI" id="CHEBI:29979"/>
        <dbReference type="ChEBI" id="CHEBI:58721"/>
        <dbReference type="ChEBI" id="CHEBI:64837"/>
        <dbReference type="ChEBI" id="CHEBI:64848"/>
        <dbReference type="EC" id="2.7.1.192"/>
    </reaction>
</comment>
<comment type="subcellular location">
    <subcellularLocation>
        <location evidence="3">Cell inner membrane</location>
        <topology evidence="3">Multi-pass membrane protein</topology>
    </subcellularLocation>
</comment>
<comment type="domain">
    <text evidence="2">The EIIB domain is phosphorylated by phospho-EIIA on a cysteinyl or histidyl residue, depending on the transported sugar. Then, it transfers the phosphoryl group to the sugar substrate concomitantly with the sugar uptake processed by the EIIC domain.</text>
</comment>
<comment type="domain">
    <text evidence="3">The EIIC domain forms the PTS system translocation channel and contains the specific substrate-binding site.</text>
</comment>
<name>PTYBC_VIBVY</name>
<dbReference type="EC" id="2.7.1.192" evidence="1"/>
<dbReference type="EMBL" id="BA000038">
    <property type="protein sequence ID" value="BAC97694.1"/>
    <property type="molecule type" value="Genomic_DNA"/>
</dbReference>
<dbReference type="RefSeq" id="WP_011152851.1">
    <property type="nucleotide sequence ID" value="NC_005140.1"/>
</dbReference>
<dbReference type="SMR" id="Q7MBS2"/>
<dbReference type="STRING" id="672.VV93_v1c45280"/>
<dbReference type="KEGG" id="vvy:VVA1668"/>
<dbReference type="PATRIC" id="fig|196600.6.peg.4791"/>
<dbReference type="eggNOG" id="COG1263">
    <property type="taxonomic scope" value="Bacteria"/>
</dbReference>
<dbReference type="eggNOG" id="COG1264">
    <property type="taxonomic scope" value="Bacteria"/>
</dbReference>
<dbReference type="HOGENOM" id="CLU_012312_2_0_6"/>
<dbReference type="Proteomes" id="UP000002675">
    <property type="component" value="Chromosome II"/>
</dbReference>
<dbReference type="GO" id="GO:0005886">
    <property type="term" value="C:plasma membrane"/>
    <property type="evidence" value="ECO:0007669"/>
    <property type="project" value="UniProtKB-SubCell"/>
</dbReference>
<dbReference type="GO" id="GO:0016301">
    <property type="term" value="F:kinase activity"/>
    <property type="evidence" value="ECO:0007669"/>
    <property type="project" value="UniProtKB-KW"/>
</dbReference>
<dbReference type="GO" id="GO:0008982">
    <property type="term" value="F:protein-N(PI)-phosphohistidine-sugar phosphotransferase activity"/>
    <property type="evidence" value="ECO:0007669"/>
    <property type="project" value="InterPro"/>
</dbReference>
<dbReference type="GO" id="GO:0090588">
    <property type="term" value="F:protein-phosphocysteine-N-acetylmuramate phosphotransferase system transporter activity"/>
    <property type="evidence" value="ECO:0007669"/>
    <property type="project" value="TreeGrafter"/>
</dbReference>
<dbReference type="GO" id="GO:0009401">
    <property type="term" value="P:phosphoenolpyruvate-dependent sugar phosphotransferase system"/>
    <property type="evidence" value="ECO:0007669"/>
    <property type="project" value="UniProtKB-KW"/>
</dbReference>
<dbReference type="CDD" id="cd00212">
    <property type="entry name" value="PTS_IIB_glc"/>
    <property type="match status" value="1"/>
</dbReference>
<dbReference type="FunFam" id="3.30.1360.60:FF:000001">
    <property type="entry name" value="PTS system glucose-specific IIBC component PtsG"/>
    <property type="match status" value="1"/>
</dbReference>
<dbReference type="Gene3D" id="3.30.1360.60">
    <property type="entry name" value="Glucose permease domain IIB"/>
    <property type="match status" value="1"/>
</dbReference>
<dbReference type="InterPro" id="IPR036878">
    <property type="entry name" value="Glu_permease_IIB"/>
</dbReference>
<dbReference type="InterPro" id="IPR018113">
    <property type="entry name" value="PTrfase_EIIB_Cys"/>
</dbReference>
<dbReference type="InterPro" id="IPR003352">
    <property type="entry name" value="PTS_EIIC"/>
</dbReference>
<dbReference type="InterPro" id="IPR013013">
    <property type="entry name" value="PTS_EIIC_1"/>
</dbReference>
<dbReference type="InterPro" id="IPR001996">
    <property type="entry name" value="PTS_IIB_1"/>
</dbReference>
<dbReference type="InterPro" id="IPR050558">
    <property type="entry name" value="PTS_Sugar-Specific_Components"/>
</dbReference>
<dbReference type="NCBIfam" id="NF007152">
    <property type="entry name" value="PRK09586.1"/>
    <property type="match status" value="1"/>
</dbReference>
<dbReference type="PANTHER" id="PTHR30175">
    <property type="entry name" value="PHOSPHOTRANSFERASE SYSTEM TRANSPORT PROTEIN"/>
    <property type="match status" value="1"/>
</dbReference>
<dbReference type="PANTHER" id="PTHR30175:SF3">
    <property type="entry name" value="PTS SYSTEM N-ACETYLMURAMIC ACID-SPECIFIC EIIBC COMPONENT"/>
    <property type="match status" value="1"/>
</dbReference>
<dbReference type="Pfam" id="PF00367">
    <property type="entry name" value="PTS_EIIB"/>
    <property type="match status" value="1"/>
</dbReference>
<dbReference type="Pfam" id="PF02378">
    <property type="entry name" value="PTS_EIIC"/>
    <property type="match status" value="1"/>
</dbReference>
<dbReference type="SUPFAM" id="SSF55604">
    <property type="entry name" value="Glucose permease domain IIB"/>
    <property type="match status" value="1"/>
</dbReference>
<dbReference type="PROSITE" id="PS51098">
    <property type="entry name" value="PTS_EIIB_TYPE_1"/>
    <property type="match status" value="1"/>
</dbReference>
<dbReference type="PROSITE" id="PS01035">
    <property type="entry name" value="PTS_EIIB_TYPE_1_CYS"/>
    <property type="match status" value="1"/>
</dbReference>
<dbReference type="PROSITE" id="PS51103">
    <property type="entry name" value="PTS_EIIC_TYPE_1"/>
    <property type="match status" value="1"/>
</dbReference>
<reference key="1">
    <citation type="journal article" date="2003" name="Genome Res.">
        <title>Comparative genome analysis of Vibrio vulnificus, a marine pathogen.</title>
        <authorList>
            <person name="Chen C.-Y."/>
            <person name="Wu K.-M."/>
            <person name="Chang Y.-C."/>
            <person name="Chang C.-H."/>
            <person name="Tsai H.-C."/>
            <person name="Liao T.-L."/>
            <person name="Liu Y.-M."/>
            <person name="Chen H.-J."/>
            <person name="Shen A.B.-T."/>
            <person name="Li J.-C."/>
            <person name="Su T.-L."/>
            <person name="Shao C.-P."/>
            <person name="Lee C.-T."/>
            <person name="Hor L.-I."/>
            <person name="Tsai S.-F."/>
        </authorList>
    </citation>
    <scope>NUCLEOTIDE SEQUENCE [LARGE SCALE GENOMIC DNA]</scope>
    <source>
        <strain>YJ016</strain>
    </source>
</reference>
<keyword id="KW-0997">Cell inner membrane</keyword>
<keyword id="KW-1003">Cell membrane</keyword>
<keyword id="KW-0418">Kinase</keyword>
<keyword id="KW-0472">Membrane</keyword>
<keyword id="KW-0598">Phosphotransferase system</keyword>
<keyword id="KW-0762">Sugar transport</keyword>
<keyword id="KW-0808">Transferase</keyword>
<keyword id="KW-0812">Transmembrane</keyword>
<keyword id="KW-1133">Transmembrane helix</keyword>
<keyword id="KW-0813">Transport</keyword>
<protein>
    <recommendedName>
        <fullName evidence="1">PTS system N-acetylmuramic acid-specific EIIBC component</fullName>
    </recommendedName>
    <alternativeName>
        <fullName evidence="1">EIIBC-MurNAc</fullName>
    </alternativeName>
    <domain>
        <recommendedName>
            <fullName evidence="1">N-acetylmuramic acid-specific phosphotransferase enzyme IIB component</fullName>
            <ecNumber evidence="1">2.7.1.192</ecNumber>
        </recommendedName>
        <alternativeName>
            <fullName evidence="1">PTS system N-acetylmuramic acid-specific EIIB component</fullName>
        </alternativeName>
    </domain>
    <domain>
        <recommendedName>
            <fullName evidence="1">N-acetylmuramic acid permease IIC component</fullName>
        </recommendedName>
        <alternativeName>
            <fullName evidence="1">PTS system N-acetylmuramic acid-specific EIIC component</fullName>
        </alternativeName>
    </domain>
</protein>
<gene>
    <name type="primary">murP</name>
    <name type="ordered locus">VVA1668</name>
</gene>
<proteinExistence type="inferred from homology"/>
<organism>
    <name type="scientific">Vibrio vulnificus (strain YJ016)</name>
    <dbReference type="NCBI Taxonomy" id="196600"/>
    <lineage>
        <taxon>Bacteria</taxon>
        <taxon>Pseudomonadati</taxon>
        <taxon>Pseudomonadota</taxon>
        <taxon>Gammaproteobacteria</taxon>
        <taxon>Vibrionales</taxon>
        <taxon>Vibrionaceae</taxon>
        <taxon>Vibrio</taxon>
    </lineage>
</organism>